<gene>
    <name evidence="1" type="primary">dapB</name>
    <name type="ordered locus">BCc_092</name>
</gene>
<reference key="1">
    <citation type="journal article" date="2006" name="Science">
        <title>A small microbial genome: the end of a long symbiotic relationship?</title>
        <authorList>
            <person name="Perez-Brocal V."/>
            <person name="Gil R."/>
            <person name="Ramos S."/>
            <person name="Lamelas A."/>
            <person name="Postigo M."/>
            <person name="Michelena J.M."/>
            <person name="Silva F.J."/>
            <person name="Moya A."/>
            <person name="Latorre A."/>
        </authorList>
    </citation>
    <scope>NUCLEOTIDE SEQUENCE [LARGE SCALE GENOMIC DNA]</scope>
    <source>
        <strain>Cc</strain>
    </source>
</reference>
<keyword id="KW-0028">Amino-acid biosynthesis</keyword>
<keyword id="KW-0963">Cytoplasm</keyword>
<keyword id="KW-0220">Diaminopimelate biosynthesis</keyword>
<keyword id="KW-0457">Lysine biosynthesis</keyword>
<keyword id="KW-0520">NAD</keyword>
<keyword id="KW-0521">NADP</keyword>
<keyword id="KW-0560">Oxidoreductase</keyword>
<keyword id="KW-1185">Reference proteome</keyword>
<sequence>MKNKTKIIISGALGRMGKILIKETKKNKLIKLVYALINNNIDIKNHNQFYKVKEKKKFITLNNLKKKKKILKFDTIIDFSSPKYSIKIIKYCLKNNKKIVLGTTGFNTEQIKIINNASKKIPIIYSPNFSIGINIIYKILKNISKILGKNSDIEIIESHHRNKIDAPSGTALQLGKIISKSMKWNFKKSAIFSRYGNIGIRKKKRIGFSTIREGNTIGEHTVLFSNKYEKISIFHKAIHRSVFAKGALKAAIWISRKKNGLYNMSDMLKKIKI</sequence>
<dbReference type="EC" id="1.17.1.8" evidence="1"/>
<dbReference type="EMBL" id="CP000263">
    <property type="protein sequence ID" value="ABJ90569.1"/>
    <property type="molecule type" value="Genomic_DNA"/>
</dbReference>
<dbReference type="RefSeq" id="WP_011672488.1">
    <property type="nucleotide sequence ID" value="NC_008513.1"/>
</dbReference>
<dbReference type="SMR" id="Q057Y0"/>
<dbReference type="STRING" id="372461.BCc_092"/>
<dbReference type="KEGG" id="bcc:BCc_092"/>
<dbReference type="eggNOG" id="COG0289">
    <property type="taxonomic scope" value="Bacteria"/>
</dbReference>
<dbReference type="HOGENOM" id="CLU_047479_2_1_6"/>
<dbReference type="OrthoDB" id="9790352at2"/>
<dbReference type="UniPathway" id="UPA00034">
    <property type="reaction ID" value="UER00018"/>
</dbReference>
<dbReference type="Proteomes" id="UP000000669">
    <property type="component" value="Chromosome"/>
</dbReference>
<dbReference type="GO" id="GO:0005829">
    <property type="term" value="C:cytosol"/>
    <property type="evidence" value="ECO:0007669"/>
    <property type="project" value="TreeGrafter"/>
</dbReference>
<dbReference type="GO" id="GO:0008839">
    <property type="term" value="F:4-hydroxy-tetrahydrodipicolinate reductase"/>
    <property type="evidence" value="ECO:0007669"/>
    <property type="project" value="UniProtKB-EC"/>
</dbReference>
<dbReference type="GO" id="GO:0051287">
    <property type="term" value="F:NAD binding"/>
    <property type="evidence" value="ECO:0007669"/>
    <property type="project" value="UniProtKB-UniRule"/>
</dbReference>
<dbReference type="GO" id="GO:0050661">
    <property type="term" value="F:NADP binding"/>
    <property type="evidence" value="ECO:0007669"/>
    <property type="project" value="UniProtKB-UniRule"/>
</dbReference>
<dbReference type="GO" id="GO:0016726">
    <property type="term" value="F:oxidoreductase activity, acting on CH or CH2 groups, NAD or NADP as acceptor"/>
    <property type="evidence" value="ECO:0007669"/>
    <property type="project" value="UniProtKB-UniRule"/>
</dbReference>
<dbReference type="GO" id="GO:0019877">
    <property type="term" value="P:diaminopimelate biosynthetic process"/>
    <property type="evidence" value="ECO:0007669"/>
    <property type="project" value="UniProtKB-UniRule"/>
</dbReference>
<dbReference type="GO" id="GO:0009089">
    <property type="term" value="P:lysine biosynthetic process via diaminopimelate"/>
    <property type="evidence" value="ECO:0007669"/>
    <property type="project" value="UniProtKB-UniRule"/>
</dbReference>
<dbReference type="CDD" id="cd02274">
    <property type="entry name" value="DHDPR_N"/>
    <property type="match status" value="1"/>
</dbReference>
<dbReference type="FunFam" id="3.30.360.10:FF:000004">
    <property type="entry name" value="4-hydroxy-tetrahydrodipicolinate reductase"/>
    <property type="match status" value="1"/>
</dbReference>
<dbReference type="Gene3D" id="3.30.360.10">
    <property type="entry name" value="Dihydrodipicolinate Reductase, domain 2"/>
    <property type="match status" value="1"/>
</dbReference>
<dbReference type="Gene3D" id="3.40.50.720">
    <property type="entry name" value="NAD(P)-binding Rossmann-like Domain"/>
    <property type="match status" value="1"/>
</dbReference>
<dbReference type="HAMAP" id="MF_00102">
    <property type="entry name" value="DapB"/>
    <property type="match status" value="1"/>
</dbReference>
<dbReference type="InterPro" id="IPR022663">
    <property type="entry name" value="DapB_C"/>
</dbReference>
<dbReference type="InterPro" id="IPR000846">
    <property type="entry name" value="DapB_N"/>
</dbReference>
<dbReference type="InterPro" id="IPR022664">
    <property type="entry name" value="DapB_N_CS"/>
</dbReference>
<dbReference type="InterPro" id="IPR023940">
    <property type="entry name" value="DHDPR_bac"/>
</dbReference>
<dbReference type="InterPro" id="IPR036291">
    <property type="entry name" value="NAD(P)-bd_dom_sf"/>
</dbReference>
<dbReference type="NCBIfam" id="TIGR00036">
    <property type="entry name" value="dapB"/>
    <property type="match status" value="1"/>
</dbReference>
<dbReference type="PANTHER" id="PTHR20836:SF0">
    <property type="entry name" value="4-HYDROXY-TETRAHYDRODIPICOLINATE REDUCTASE 1, CHLOROPLASTIC-RELATED"/>
    <property type="match status" value="1"/>
</dbReference>
<dbReference type="PANTHER" id="PTHR20836">
    <property type="entry name" value="DIHYDRODIPICOLINATE REDUCTASE"/>
    <property type="match status" value="1"/>
</dbReference>
<dbReference type="Pfam" id="PF05173">
    <property type="entry name" value="DapB_C"/>
    <property type="match status" value="1"/>
</dbReference>
<dbReference type="Pfam" id="PF01113">
    <property type="entry name" value="DapB_N"/>
    <property type="match status" value="1"/>
</dbReference>
<dbReference type="PIRSF" id="PIRSF000161">
    <property type="entry name" value="DHPR"/>
    <property type="match status" value="1"/>
</dbReference>
<dbReference type="SUPFAM" id="SSF55347">
    <property type="entry name" value="Glyceraldehyde-3-phosphate dehydrogenase-like, C-terminal domain"/>
    <property type="match status" value="1"/>
</dbReference>
<dbReference type="SUPFAM" id="SSF51735">
    <property type="entry name" value="NAD(P)-binding Rossmann-fold domains"/>
    <property type="match status" value="1"/>
</dbReference>
<dbReference type="PROSITE" id="PS01298">
    <property type="entry name" value="DAPB"/>
    <property type="match status" value="1"/>
</dbReference>
<feature type="chain" id="PRO_1000057680" description="4-hydroxy-tetrahydrodipicolinate reductase">
    <location>
        <begin position="1"/>
        <end position="273"/>
    </location>
</feature>
<feature type="active site" description="Proton donor/acceptor" evidence="1">
    <location>
        <position position="159"/>
    </location>
</feature>
<feature type="active site" description="Proton donor" evidence="1">
    <location>
        <position position="163"/>
    </location>
</feature>
<feature type="binding site" evidence="1">
    <location>
        <begin position="11"/>
        <end position="16"/>
    </location>
    <ligand>
        <name>NAD(+)</name>
        <dbReference type="ChEBI" id="CHEBI:57540"/>
    </ligand>
</feature>
<feature type="binding site" evidence="1">
    <location>
        <begin position="102"/>
        <end position="104"/>
    </location>
    <ligand>
        <name>NAD(+)</name>
        <dbReference type="ChEBI" id="CHEBI:57540"/>
    </ligand>
</feature>
<feature type="binding site" evidence="1">
    <location>
        <begin position="126"/>
        <end position="129"/>
    </location>
    <ligand>
        <name>NAD(+)</name>
        <dbReference type="ChEBI" id="CHEBI:57540"/>
    </ligand>
</feature>
<feature type="binding site" evidence="1">
    <location>
        <position position="160"/>
    </location>
    <ligand>
        <name>(S)-2,3,4,5-tetrahydrodipicolinate</name>
        <dbReference type="ChEBI" id="CHEBI:16845"/>
    </ligand>
</feature>
<feature type="binding site" evidence="1">
    <location>
        <begin position="169"/>
        <end position="170"/>
    </location>
    <ligand>
        <name>(S)-2,3,4,5-tetrahydrodipicolinate</name>
        <dbReference type="ChEBI" id="CHEBI:16845"/>
    </ligand>
</feature>
<accession>Q057Y0</accession>
<organism>
    <name type="scientific">Buchnera aphidicola subsp. Cinara cedri (strain Cc)</name>
    <dbReference type="NCBI Taxonomy" id="372461"/>
    <lineage>
        <taxon>Bacteria</taxon>
        <taxon>Pseudomonadati</taxon>
        <taxon>Pseudomonadota</taxon>
        <taxon>Gammaproteobacteria</taxon>
        <taxon>Enterobacterales</taxon>
        <taxon>Erwiniaceae</taxon>
        <taxon>Buchnera</taxon>
    </lineage>
</organism>
<name>DAPB_BUCCC</name>
<evidence type="ECO:0000255" key="1">
    <source>
        <dbReference type="HAMAP-Rule" id="MF_00102"/>
    </source>
</evidence>
<evidence type="ECO:0000305" key="2"/>
<comment type="function">
    <text evidence="1">Catalyzes the conversion of 4-hydroxy-tetrahydrodipicolinate (HTPA) to tetrahydrodipicolinate.</text>
</comment>
<comment type="catalytic activity">
    <reaction evidence="1">
        <text>(S)-2,3,4,5-tetrahydrodipicolinate + NAD(+) + H2O = (2S,4S)-4-hydroxy-2,3,4,5-tetrahydrodipicolinate + NADH + H(+)</text>
        <dbReference type="Rhea" id="RHEA:35323"/>
        <dbReference type="ChEBI" id="CHEBI:15377"/>
        <dbReference type="ChEBI" id="CHEBI:15378"/>
        <dbReference type="ChEBI" id="CHEBI:16845"/>
        <dbReference type="ChEBI" id="CHEBI:57540"/>
        <dbReference type="ChEBI" id="CHEBI:57945"/>
        <dbReference type="ChEBI" id="CHEBI:67139"/>
        <dbReference type="EC" id="1.17.1.8"/>
    </reaction>
</comment>
<comment type="catalytic activity">
    <reaction evidence="1">
        <text>(S)-2,3,4,5-tetrahydrodipicolinate + NADP(+) + H2O = (2S,4S)-4-hydroxy-2,3,4,5-tetrahydrodipicolinate + NADPH + H(+)</text>
        <dbReference type="Rhea" id="RHEA:35331"/>
        <dbReference type="ChEBI" id="CHEBI:15377"/>
        <dbReference type="ChEBI" id="CHEBI:15378"/>
        <dbReference type="ChEBI" id="CHEBI:16845"/>
        <dbReference type="ChEBI" id="CHEBI:57783"/>
        <dbReference type="ChEBI" id="CHEBI:58349"/>
        <dbReference type="ChEBI" id="CHEBI:67139"/>
        <dbReference type="EC" id="1.17.1.8"/>
    </reaction>
</comment>
<comment type="pathway">
    <text evidence="1">Amino-acid biosynthesis; L-lysine biosynthesis via DAP pathway; (S)-tetrahydrodipicolinate from L-aspartate: step 4/4.</text>
</comment>
<comment type="subunit">
    <text evidence="1">Homotetramer.</text>
</comment>
<comment type="subcellular location">
    <subcellularLocation>
        <location evidence="1">Cytoplasm</location>
    </subcellularLocation>
</comment>
<comment type="similarity">
    <text evidence="1">Belongs to the DapB family.</text>
</comment>
<comment type="caution">
    <text evidence="2">Was originally thought to be a dihydrodipicolinate reductase (DHDPR), catalyzing the conversion of dihydrodipicolinate to tetrahydrodipicolinate. However, it was shown in E.coli that the substrate of the enzymatic reaction is not dihydrodipicolinate (DHDP) but in fact (2S,4S)-4-hydroxy-2,3,4,5-tetrahydrodipicolinic acid (HTPA), the product released by the DapA-catalyzed reaction.</text>
</comment>
<proteinExistence type="inferred from homology"/>
<protein>
    <recommendedName>
        <fullName evidence="1">4-hydroxy-tetrahydrodipicolinate reductase</fullName>
        <shortName evidence="1">HTPA reductase</shortName>
        <ecNumber evidence="1">1.17.1.8</ecNumber>
    </recommendedName>
</protein>